<dbReference type="EMBL" id="X56674">
    <property type="protein sequence ID" value="CAA39997.1"/>
    <property type="molecule type" value="mRNA"/>
</dbReference>
<dbReference type="EMBL" id="X57341">
    <property type="protein sequence ID" value="CAA40617.1"/>
    <property type="molecule type" value="mRNA"/>
</dbReference>
<dbReference type="EMBL" id="X57340">
    <property type="protein sequence ID" value="CAA40616.1"/>
    <property type="molecule type" value="mRNA"/>
</dbReference>
<dbReference type="EMBL" id="X57339">
    <property type="protein sequence ID" value="CAA40615.1"/>
    <property type="molecule type" value="mRNA"/>
</dbReference>
<dbReference type="EMBL" id="S75943">
    <property type="protein sequence ID" value="AAB33959.1"/>
    <property type="molecule type" value="mRNA"/>
</dbReference>
<dbReference type="EMBL" id="X59473">
    <property type="protein sequence ID" value="CAA42077.1"/>
    <property type="molecule type" value="mRNA"/>
</dbReference>
<dbReference type="EMBL" id="S63196">
    <property type="protein sequence ID" value="AAB19628.1"/>
    <property type="molecule type" value="mRNA"/>
</dbReference>
<dbReference type="PIR" id="A43786">
    <property type="entry name" value="A43786"/>
</dbReference>
<dbReference type="PIR" id="I51272">
    <property type="entry name" value="I51272"/>
</dbReference>
<dbReference type="PIR" id="S13512">
    <property type="entry name" value="S13512"/>
</dbReference>
<dbReference type="RefSeq" id="NP_990657.1">
    <molecule id="P22448-1"/>
    <property type="nucleotide sequence ID" value="NM_205326.2"/>
</dbReference>
<dbReference type="RefSeq" id="XP_015136799.1">
    <property type="nucleotide sequence ID" value="XM_015281313.1"/>
</dbReference>
<dbReference type="RefSeq" id="XP_015136800.1">
    <molecule id="P22448-1"/>
    <property type="nucleotide sequence ID" value="XM_015281314.4"/>
</dbReference>
<dbReference type="RefSeq" id="XP_015136802.1">
    <molecule id="P22448-2"/>
    <property type="nucleotide sequence ID" value="XM_015281316.4"/>
</dbReference>
<dbReference type="RefSeq" id="XP_040532641.1">
    <molecule id="P22448-1"/>
    <property type="nucleotide sequence ID" value="XM_040676707.2"/>
</dbReference>
<dbReference type="RefSeq" id="XP_040532647.1">
    <molecule id="P22448-1"/>
    <property type="nucleotide sequence ID" value="XM_040676713.2"/>
</dbReference>
<dbReference type="RefSeq" id="XP_046766412.1">
    <molecule id="P22448-1"/>
    <property type="nucleotide sequence ID" value="XM_046910456.1"/>
</dbReference>
<dbReference type="RefSeq" id="XP_046766413.1">
    <molecule id="P22448-1"/>
    <property type="nucleotide sequence ID" value="XM_046910457.1"/>
</dbReference>
<dbReference type="RefSeq" id="XP_046766414.1">
    <molecule id="P22448-1"/>
    <property type="nucleotide sequence ID" value="XM_046910458.1"/>
</dbReference>
<dbReference type="RefSeq" id="XP_046766415.1">
    <molecule id="P22448-1"/>
    <property type="nucleotide sequence ID" value="XM_046910459.1"/>
</dbReference>
<dbReference type="RefSeq" id="XP_046766418.1">
    <molecule id="P22448-2"/>
    <property type="nucleotide sequence ID" value="XM_046910462.1"/>
</dbReference>
<dbReference type="SMR" id="P22448"/>
<dbReference type="FunCoup" id="P22448">
    <property type="interactions" value="94"/>
</dbReference>
<dbReference type="STRING" id="9031.ENSGALP00000036953"/>
<dbReference type="PaxDb" id="9031-ENSGALP00000036953"/>
<dbReference type="Ensembl" id="ENSGALT00010005624.1">
    <molecule id="P22448-2"/>
    <property type="protein sequence ID" value="ENSGALP00010003463.1"/>
    <property type="gene ID" value="ENSGALG00010002438.1"/>
</dbReference>
<dbReference type="GeneID" id="396266"/>
<dbReference type="KEGG" id="gga:396266"/>
<dbReference type="CTD" id="5915"/>
<dbReference type="VEuPathDB" id="HostDB:geneid_396266"/>
<dbReference type="eggNOG" id="KOG3575">
    <property type="taxonomic scope" value="Eukaryota"/>
</dbReference>
<dbReference type="GeneTree" id="ENSGT00940000156196"/>
<dbReference type="HOGENOM" id="CLU_007368_18_2_1"/>
<dbReference type="InParanoid" id="P22448"/>
<dbReference type="OMA" id="TDWQHRH"/>
<dbReference type="OrthoDB" id="6081310at2759"/>
<dbReference type="PhylomeDB" id="P22448"/>
<dbReference type="TreeFam" id="TF328382"/>
<dbReference type="Reactome" id="R-GGA-383280">
    <property type="pathway name" value="Nuclear Receptor transcription pathway"/>
</dbReference>
<dbReference type="PRO" id="PR:P22448"/>
<dbReference type="Proteomes" id="UP000000539">
    <property type="component" value="Chromosome 2"/>
</dbReference>
<dbReference type="Bgee" id="ENSGALG00000011298">
    <property type="expression patterns" value="Expressed in spermatid and 12 other cell types or tissues"/>
</dbReference>
<dbReference type="GO" id="GO:0005634">
    <property type="term" value="C:nucleus"/>
    <property type="evidence" value="ECO:0000318"/>
    <property type="project" value="GO_Central"/>
</dbReference>
<dbReference type="GO" id="GO:0048471">
    <property type="term" value="C:perinuclear region of cytoplasm"/>
    <property type="evidence" value="ECO:0000314"/>
    <property type="project" value="AgBase"/>
</dbReference>
<dbReference type="GO" id="GO:0004879">
    <property type="term" value="F:nuclear receptor activity"/>
    <property type="evidence" value="ECO:0000318"/>
    <property type="project" value="GO_Central"/>
</dbReference>
<dbReference type="GO" id="GO:0000978">
    <property type="term" value="F:RNA polymerase II cis-regulatory region sequence-specific DNA binding"/>
    <property type="evidence" value="ECO:0000318"/>
    <property type="project" value="GO_Central"/>
</dbReference>
<dbReference type="GO" id="GO:0008270">
    <property type="term" value="F:zinc ion binding"/>
    <property type="evidence" value="ECO:0007669"/>
    <property type="project" value="UniProtKB-KW"/>
</dbReference>
<dbReference type="GO" id="GO:0071729">
    <property type="term" value="P:beak morphogenesis"/>
    <property type="evidence" value="ECO:0000314"/>
    <property type="project" value="UniProtKB"/>
</dbReference>
<dbReference type="GO" id="GO:0030154">
    <property type="term" value="P:cell differentiation"/>
    <property type="evidence" value="ECO:0000318"/>
    <property type="project" value="GO_Central"/>
</dbReference>
<dbReference type="GO" id="GO:0070660">
    <property type="term" value="P:inner ear receptor cell differentiation involved in inner ear sensory epithelium regeneration"/>
    <property type="evidence" value="ECO:0000303"/>
    <property type="project" value="AgBase"/>
</dbReference>
<dbReference type="GO" id="GO:0035108">
    <property type="term" value="P:limb morphogenesis"/>
    <property type="evidence" value="ECO:0000314"/>
    <property type="project" value="UniProtKB"/>
</dbReference>
<dbReference type="GO" id="GO:0000122">
    <property type="term" value="P:negative regulation of transcription by RNA polymerase II"/>
    <property type="evidence" value="ECO:0000318"/>
    <property type="project" value="GO_Central"/>
</dbReference>
<dbReference type="GO" id="GO:0045944">
    <property type="term" value="P:positive regulation of transcription by RNA polymerase II"/>
    <property type="evidence" value="ECO:0000318"/>
    <property type="project" value="GO_Central"/>
</dbReference>
<dbReference type="GO" id="GO:0032526">
    <property type="term" value="P:response to retinoic acid"/>
    <property type="evidence" value="ECO:0000314"/>
    <property type="project" value="UniProtKB"/>
</dbReference>
<dbReference type="GO" id="GO:0048384">
    <property type="term" value="P:retinoic acid receptor signaling pathway"/>
    <property type="evidence" value="ECO:0000318"/>
    <property type="project" value="GO_Central"/>
</dbReference>
<dbReference type="CDD" id="cd06964">
    <property type="entry name" value="NR_DBD_RAR"/>
    <property type="match status" value="1"/>
</dbReference>
<dbReference type="CDD" id="cd06937">
    <property type="entry name" value="NR_LBD_RAR"/>
    <property type="match status" value="1"/>
</dbReference>
<dbReference type="FunFam" id="1.10.565.10:FF:000073">
    <property type="entry name" value="Retinoic acid receptor beta"/>
    <property type="match status" value="1"/>
</dbReference>
<dbReference type="FunFam" id="3.30.50.10:FF:000004">
    <property type="entry name" value="Retinoic acid receptor beta isoform"/>
    <property type="match status" value="1"/>
</dbReference>
<dbReference type="Gene3D" id="3.30.50.10">
    <property type="entry name" value="Erythroid Transcription Factor GATA-1, subunit A"/>
    <property type="match status" value="1"/>
</dbReference>
<dbReference type="Gene3D" id="1.10.565.10">
    <property type="entry name" value="Retinoid X Receptor"/>
    <property type="match status" value="1"/>
</dbReference>
<dbReference type="InterPro" id="IPR035500">
    <property type="entry name" value="NHR-like_dom_sf"/>
</dbReference>
<dbReference type="InterPro" id="IPR047159">
    <property type="entry name" value="NR_DBD_RAR"/>
</dbReference>
<dbReference type="InterPro" id="IPR047158">
    <property type="entry name" value="NR_LBD_RAR"/>
</dbReference>
<dbReference type="InterPro" id="IPR000536">
    <property type="entry name" value="Nucl_hrmn_rcpt_lig-bd"/>
</dbReference>
<dbReference type="InterPro" id="IPR001723">
    <property type="entry name" value="Nuclear_hrmn_rcpt"/>
</dbReference>
<dbReference type="InterPro" id="IPR003078">
    <property type="entry name" value="Retinoic_acid_rcpt"/>
</dbReference>
<dbReference type="InterPro" id="IPR001628">
    <property type="entry name" value="Znf_hrmn_rcpt"/>
</dbReference>
<dbReference type="InterPro" id="IPR013088">
    <property type="entry name" value="Znf_NHR/GATA"/>
</dbReference>
<dbReference type="PANTHER" id="PTHR24085">
    <property type="entry name" value="NUCLEAR HORMONE RECEPTOR"/>
    <property type="match status" value="1"/>
</dbReference>
<dbReference type="PANTHER" id="PTHR24085:SF5">
    <property type="entry name" value="RETINOIC ACID RECEPTOR BETA"/>
    <property type="match status" value="1"/>
</dbReference>
<dbReference type="Pfam" id="PF00104">
    <property type="entry name" value="Hormone_recep"/>
    <property type="match status" value="1"/>
</dbReference>
<dbReference type="Pfam" id="PF00105">
    <property type="entry name" value="zf-C4"/>
    <property type="match status" value="1"/>
</dbReference>
<dbReference type="PRINTS" id="PR01292">
    <property type="entry name" value="RETNOICACIDR"/>
</dbReference>
<dbReference type="PRINTS" id="PR00398">
    <property type="entry name" value="STRDHORMONER"/>
</dbReference>
<dbReference type="PRINTS" id="PR00047">
    <property type="entry name" value="STROIDFINGER"/>
</dbReference>
<dbReference type="SMART" id="SM00430">
    <property type="entry name" value="HOLI"/>
    <property type="match status" value="1"/>
</dbReference>
<dbReference type="SMART" id="SM00399">
    <property type="entry name" value="ZnF_C4"/>
    <property type="match status" value="1"/>
</dbReference>
<dbReference type="SUPFAM" id="SSF57716">
    <property type="entry name" value="Glucocorticoid receptor-like (DNA-binding domain)"/>
    <property type="match status" value="1"/>
</dbReference>
<dbReference type="SUPFAM" id="SSF48508">
    <property type="entry name" value="Nuclear receptor ligand-binding domain"/>
    <property type="match status" value="1"/>
</dbReference>
<dbReference type="PROSITE" id="PS51843">
    <property type="entry name" value="NR_LBD"/>
    <property type="match status" value="1"/>
</dbReference>
<dbReference type="PROSITE" id="PS00031">
    <property type="entry name" value="NUCLEAR_REC_DBD_1"/>
    <property type="match status" value="1"/>
</dbReference>
<dbReference type="PROSITE" id="PS51030">
    <property type="entry name" value="NUCLEAR_REC_DBD_2"/>
    <property type="match status" value="1"/>
</dbReference>
<name>RARB_CHICK</name>
<sequence>MTTSSRTCPVPAVNGHMTHYPAAPYPLLFPPVIGGLSLPSLHGLQSHPPTSGCSTPSPATVETQSTSSEELVPSPPSPLPPPRVYKPCFVCQDKSSGYHYGVSACEGCKGFFRRSIQKNMVYTCHRDKNCVINKVTRNRCQYCRLQKCFEVGMSKESVRNDRNKKKKEPTKQESTENYEMTAELDDLTEKIRKAHQETFPSLCQLGKYTTNSSADHRVRLDLGLWDKFSELATKCIIKIVEFAKRLPGFTSLTIADQITLLKAACLDILILRICTRYTPEQDTMTFSDGLTLNRTQMHNAGFGPLTDLVFTFANQLLPLEMDDTETGLLSAICLICGDRQDLEEPMKVDKLQEPLLEALKIYIRKRRPNKPHMFPKILMKITDLRSISAKGAERVITLKMEIPGSMPPLIQEMLENSEGHEPLTPTSNGNTAEHSPSISPSSVDNSSVSQSPMVQ</sequence>
<protein>
    <recommendedName>
        <fullName>Retinoic acid receptor beta</fullName>
        <shortName>RAR-beta</shortName>
    </recommendedName>
    <alternativeName>
        <fullName>Nuclear receptor subfamily 1 group B member 2</fullName>
    </alternativeName>
</protein>
<feature type="chain" id="PRO_0000053469" description="Retinoic acid receptor beta">
    <location>
        <begin position="1"/>
        <end position="455"/>
    </location>
</feature>
<feature type="domain" description="NR LBD" evidence="3">
    <location>
        <begin position="183"/>
        <end position="417"/>
    </location>
</feature>
<feature type="DNA-binding region" description="Nuclear receptor" evidence="2">
    <location>
        <begin position="88"/>
        <end position="153"/>
    </location>
</feature>
<feature type="zinc finger region" description="NR C4-type" evidence="2">
    <location>
        <begin position="88"/>
        <end position="108"/>
    </location>
</feature>
<feature type="zinc finger region" description="NR C4-type" evidence="2">
    <location>
        <begin position="124"/>
        <end position="148"/>
    </location>
</feature>
<feature type="region of interest" description="Modulating" evidence="1">
    <location>
        <begin position="1"/>
        <end position="87"/>
    </location>
</feature>
<feature type="region of interest" description="Disordered" evidence="4">
    <location>
        <begin position="44"/>
        <end position="78"/>
    </location>
</feature>
<feature type="region of interest" description="Hinge" evidence="1">
    <location>
        <begin position="154"/>
        <end position="182"/>
    </location>
</feature>
<feature type="region of interest" description="Disordered" evidence="4">
    <location>
        <begin position="416"/>
        <end position="455"/>
    </location>
</feature>
<feature type="compositionally biased region" description="Polar residues" evidence="4">
    <location>
        <begin position="47"/>
        <end position="66"/>
    </location>
</feature>
<feature type="compositionally biased region" description="Polar residues" evidence="4">
    <location>
        <begin position="424"/>
        <end position="434"/>
    </location>
</feature>
<feature type="compositionally biased region" description="Low complexity" evidence="4">
    <location>
        <begin position="435"/>
        <end position="455"/>
    </location>
</feature>
<feature type="splice variant" id="VSP_003641" description="In isoform Beta-2." evidence="8 9 10 11">
    <original>MTTSSRTCPVPAVNGHMTHYPAAPYPLLFPPVIGGLSLPSLHGLQSHPPTSGCSTPSPAT</original>
    <variation>MFDCMDVLAVSPAQMLDFYTASPSSCMLQEKALKACFSGLAQTEWQHRHSAQS</variation>
    <location>
        <begin position="1"/>
        <end position="60"/>
    </location>
</feature>
<feature type="sequence conflict" description="In Ref. 1; CAA39997." evidence="12" ref="1">
    <original>P</original>
    <variation>A</variation>
    <location>
        <position position="30"/>
    </location>
</feature>
<feature type="sequence conflict" description="In Ref. 4; CAA42077." evidence="12" ref="4">
    <original>S</original>
    <variation>T</variation>
    <location>
        <position position="103"/>
    </location>
</feature>
<feature type="sequence conflict" description="In Ref. 6; AAB19628." evidence="12" ref="6">
    <original>E</original>
    <variation>D</variation>
    <location>
        <position position="173"/>
    </location>
</feature>
<accession>P22448</accession>
<accession>P27537</accession>
<accession>Q90598</accession>
<accession>Q91354</accession>
<reference key="1">
    <citation type="journal article" date="1991" name="Nucleic Acids Res.">
        <title>Nucleotide sequence of an isoform of chicken retinoic acid binding protein-beta varying in its A domain.</title>
        <authorList>
            <person name="Padanilam B.J."/>
            <person name="McLeod L.B."/>
            <person name="Suzuki H."/>
            <person name="Solursh M."/>
        </authorList>
    </citation>
    <scope>NUCLEOTIDE SEQUENCE [MRNA] (ISOFORM BETA-1)</scope>
</reference>
<reference key="2">
    <citation type="journal article" date="1991" name="Biochim. Biophys. Acta">
        <title>Isoforms of retinoic acid receptor beta expressed in the chicken embryo.</title>
        <authorList>
            <person name="Nohno T."/>
            <person name="Muto K."/>
            <person name="Noji S."/>
            <person name="Saito T."/>
            <person name="Taniguchi S."/>
        </authorList>
    </citation>
    <scope>NUCLEOTIDE SEQUENCE [MRNA] (ISOFORMS BETA-1 AND BETA-2)</scope>
</reference>
<reference key="3">
    <citation type="journal article" date="1991" name="Nature">
        <title>Retinoic acid induces polarizing activity but is unlikely to be a morphogen in the chick limb bud.</title>
        <authorList>
            <person name="Noji S."/>
            <person name="Nohno T."/>
            <person name="Koyama E."/>
            <person name="Muto K."/>
            <person name="Ohyama K."/>
            <person name="Aoki Y."/>
            <person name="Tamura K."/>
            <person name="Ohsugi K."/>
            <person name="Ide H."/>
            <person name="Taniguchi S."/>
            <person name="Saito T."/>
        </authorList>
    </citation>
    <scope>NUCLEOTIDE SEQUENCE [MRNA] (ISOFORM BETA-2)</scope>
    <scope>DEVELOPMENTAL STAGE</scope>
    <source>
        <strain>White leghorn</strain>
    </source>
</reference>
<reference key="4">
    <citation type="journal article" date="1991" name="Development">
        <title>Temporal and regional differences in the expression pattern of distinct retinoic acid receptor-beta transcripts in the chick embryo.</title>
        <authorList>
            <person name="Smith S.M."/>
            <person name="Eichele G."/>
        </authorList>
    </citation>
    <scope>NUCLEOTIDE SEQUENCE [MRNA] (ISOFORM BETA-2)</scope>
</reference>
<reference key="5">
    <citation type="journal article" date="1995" name="Dev. Dyn.">
        <title>Differential expression of retinoic acid receptor-beta isoforms during chick limb ontogeny.</title>
        <authorList>
            <person name="Smith S.M."/>
            <person name="Kirstein I.J."/>
            <person name="Wang Z.S."/>
            <person name="Fallon J.F."/>
            <person name="Kelley J."/>
            <person name="Bradshaw-Rouse J."/>
        </authorList>
    </citation>
    <scope>NUCLEOTIDE SEQUENCE [MRNA] OF 1-59 (ISOFORM BETA-1)</scope>
    <scope>FUNCTION</scope>
    <scope>DEVELOPMENTAL STAGE</scope>
</reference>
<reference key="6">
    <citation type="journal article" date="1991" name="Development">
        <title>Retinoic acid treatment alters the distribution of retinoic acid receptor-beta transcripts in the embryonic chick face.</title>
        <authorList>
            <person name="Rowe A."/>
            <person name="Richman J.M."/>
            <person name="Brickell P.M."/>
        </authorList>
    </citation>
    <scope>NUCLEOTIDE SEQUENCE [MRNA] OF 25-455 (ISOFORM BETA-2)</scope>
    <scope>INDUCTION</scope>
    <scope>FUNCTION</scope>
    <scope>DEVELOPMENTAL STAGE</scope>
</reference>
<organism>
    <name type="scientific">Gallus gallus</name>
    <name type="common">Chicken</name>
    <dbReference type="NCBI Taxonomy" id="9031"/>
    <lineage>
        <taxon>Eukaryota</taxon>
        <taxon>Metazoa</taxon>
        <taxon>Chordata</taxon>
        <taxon>Craniata</taxon>
        <taxon>Vertebrata</taxon>
        <taxon>Euteleostomi</taxon>
        <taxon>Archelosauria</taxon>
        <taxon>Archosauria</taxon>
        <taxon>Dinosauria</taxon>
        <taxon>Saurischia</taxon>
        <taxon>Theropoda</taxon>
        <taxon>Coelurosauria</taxon>
        <taxon>Aves</taxon>
        <taxon>Neognathae</taxon>
        <taxon>Galloanserae</taxon>
        <taxon>Galliformes</taxon>
        <taxon>Phasianidae</taxon>
        <taxon>Phasianinae</taxon>
        <taxon>Gallus</taxon>
    </lineage>
</organism>
<gene>
    <name type="primary">RARB</name>
    <name type="synonym">NR1B2</name>
</gene>
<proteinExistence type="evidence at transcript level"/>
<evidence type="ECO:0000250" key="1"/>
<evidence type="ECO:0000255" key="2">
    <source>
        <dbReference type="PROSITE-ProRule" id="PRU00407"/>
    </source>
</evidence>
<evidence type="ECO:0000255" key="3">
    <source>
        <dbReference type="PROSITE-ProRule" id="PRU01189"/>
    </source>
</evidence>
<evidence type="ECO:0000256" key="4">
    <source>
        <dbReference type="SAM" id="MobiDB-lite"/>
    </source>
</evidence>
<evidence type="ECO:0000269" key="5">
    <source>
    </source>
</evidence>
<evidence type="ECO:0000269" key="6">
    <source>
    </source>
</evidence>
<evidence type="ECO:0000269" key="7">
    <source>
    </source>
</evidence>
<evidence type="ECO:0000303" key="8">
    <source>
    </source>
</evidence>
<evidence type="ECO:0000303" key="9">
    <source>
    </source>
</evidence>
<evidence type="ECO:0000303" key="10">
    <source>
    </source>
</evidence>
<evidence type="ECO:0000303" key="11">
    <source>
    </source>
</evidence>
<evidence type="ECO:0000305" key="12"/>
<comment type="function">
    <text evidence="1 5 7">Receptor for retinoic acid. Retinoic acid receptors bind as heterodimers to their target response elements in response to their ligands, all-trans or 9-cis retinoic acid, and regulate gene expression in various biological processes. The RAR/RXR heterodimers bind to the retinoic acid response elements (RARE) composed of tandem 5'-AGGTCA-3' sites known as DR1-DR5 (By similarity). Required for limb and craniofacial development.</text>
</comment>
<comment type="subunit">
    <text evidence="1">Heterodimer; with a RXR molecule. Binds DNA preferentially as a RAR/RXR heterodimer.</text>
</comment>
<comment type="subcellular location">
    <subcellularLocation>
        <location evidence="2">Nucleus</location>
    </subcellularLocation>
</comment>
<comment type="alternative products">
    <event type="alternative splicing"/>
    <isoform>
        <id>P22448-1</id>
        <name>Beta-1</name>
        <sequence type="displayed"/>
    </isoform>
    <isoform>
        <id>P22448-2</id>
        <name>Beta-2</name>
        <sequence type="described" ref="VSP_003641"/>
    </isoform>
</comment>
<comment type="developmental stage">
    <text evidence="5 6 7">In the developing embryo, expressed in the limb bud mesenchyme, in cranofacial mesenchyme, and in hindbrain neuroectoderm. At stages 20, 24 and 28 of embryonic development, expressed ununiformly in facial primordia. Present in lateral nasal processes, at edges and corners of frontonasal mass and in the anterior part of the maxillary primordia. Expressed in mesenchyme at all stages of facial development. In the developing limb, isoform Beta-1 is expressed limb bud mesenchyme and ectoderm, then become restricted within perichondrial regions and loose connective tissue of the limb, while isoform Beta-2, expressed in subsets of similar tissues, in the proximal limb mesenchyme and in the initial mesenchymal condensate. later abundantly expressed in cells lateral to the digit cartilage.</text>
</comment>
<comment type="induction">
    <text evidence="5">By retinoic acid.</text>
</comment>
<comment type="domain">
    <text>Composed of three domains: a modulating N-terminal domain, a DNA-binding domain and a C-terminal ligand-binding domain.</text>
</comment>
<comment type="similarity">
    <text evidence="12">Belongs to the nuclear hormone receptor family. NR1 subfamily.</text>
</comment>
<keyword id="KW-0025">Alternative splicing</keyword>
<keyword id="KW-0238">DNA-binding</keyword>
<keyword id="KW-0479">Metal-binding</keyword>
<keyword id="KW-0539">Nucleus</keyword>
<keyword id="KW-0675">Receptor</keyword>
<keyword id="KW-1185">Reference proteome</keyword>
<keyword id="KW-0804">Transcription</keyword>
<keyword id="KW-0805">Transcription regulation</keyword>
<keyword id="KW-0862">Zinc</keyword>
<keyword id="KW-0863">Zinc-finger</keyword>